<evidence type="ECO:0000250" key="1">
    <source>
        <dbReference type="UniProtKB" id="B8M9J8"/>
    </source>
</evidence>
<evidence type="ECO:0000269" key="2">
    <source>
    </source>
</evidence>
<evidence type="ECO:0000269" key="3">
    <source>
    </source>
</evidence>
<evidence type="ECO:0000303" key="4">
    <source>
    </source>
</evidence>
<evidence type="ECO:0000305" key="5"/>
<evidence type="ECO:0000305" key="6">
    <source>
    </source>
</evidence>
<evidence type="ECO:0000305" key="7">
    <source>
    </source>
</evidence>
<name>SUBE_METRA</name>
<keyword id="KW-0274">FAD</keyword>
<keyword id="KW-0285">Flavoprotein</keyword>
<keyword id="KW-0503">Monooxygenase</keyword>
<keyword id="KW-0560">Oxidoreductase</keyword>
<protein>
    <recommendedName>
        <fullName evidence="4">FAD-dependent monooxygenase subE</fullName>
        <ecNumber evidence="6">1.-.-.-</ecNumber>
    </recommendedName>
    <alternativeName>
        <fullName evidence="4">Subglutinol biosynthesis cluster protein E</fullName>
    </alternativeName>
</protein>
<organism>
    <name type="scientific">Metarhizium robertsii (strain ARSEF 23 / ATCC MYA-3075)</name>
    <name type="common">Metarhizium anisopliae (strain ARSEF 23)</name>
    <dbReference type="NCBI Taxonomy" id="655844"/>
    <lineage>
        <taxon>Eukaryota</taxon>
        <taxon>Fungi</taxon>
        <taxon>Dikarya</taxon>
        <taxon>Ascomycota</taxon>
        <taxon>Pezizomycotina</taxon>
        <taxon>Sordariomycetes</taxon>
        <taxon>Hypocreomycetidae</taxon>
        <taxon>Hypocreales</taxon>
        <taxon>Clavicipitaceae</taxon>
        <taxon>Metarhizium</taxon>
    </lineage>
</organism>
<sequence>MSQRQFKVIIIGGSVTGLTLAHSLHKIGIDYVVLEKRDTVTPQEGASIGILPNGARILDQLGLYEAIEDEAPPLGATRIHFPDGFAFTSLYPKKILENFGYPIAFLERRQLLRILYDALPDKTRIHVNKTMSTIEHFTKDEITGARVLTKEGDVYEGDLIVGADGIHSQTRGEIWRRINSSKSEFEPAECIDKCILIEYSCCFGISKCVTGLIAGEQVMHMRNGRTLVVIPSKDEVVFWFLVEKLDRKYTYSEAPRFTIDDATALCSQVFTLPIGNGIKFEDVWNKREVVNMLSLEESCLSTWSTGRLVCIGDSIHKVSIPS</sequence>
<gene>
    <name evidence="4" type="primary">subE</name>
    <name type="ORF">MAA_07499</name>
</gene>
<reference key="1">
    <citation type="journal article" date="2011" name="PLoS Genet.">
        <title>Genome sequencing and comparative transcriptomics of the model entomopathogenic fungi Metarhizium anisopliae and M. acridum.</title>
        <authorList>
            <person name="Gao Q."/>
            <person name="Jin K."/>
            <person name="Ying S.-H."/>
            <person name="Zhang Y."/>
            <person name="Xiao G."/>
            <person name="Shang Y."/>
            <person name="Duan Z."/>
            <person name="Hu X."/>
            <person name="Xie X.-Q."/>
            <person name="Zhou G."/>
            <person name="Peng G."/>
            <person name="Luo Z."/>
            <person name="Huang W."/>
            <person name="Wang B."/>
            <person name="Fang W."/>
            <person name="Wang S."/>
            <person name="Zhong Y."/>
            <person name="Ma L.-J."/>
            <person name="St Leger R.J."/>
            <person name="Zhao G.-P."/>
            <person name="Pei Y."/>
            <person name="Feng M.-G."/>
            <person name="Xia Y."/>
            <person name="Wang C."/>
        </authorList>
    </citation>
    <scope>NUCLEOTIDE SEQUENCE [LARGE SCALE GENOMIC DNA]</scope>
    <source>
        <strain>ARSEF 23 / ATCC MYA-3075</strain>
    </source>
</reference>
<reference key="2">
    <citation type="journal article" date="2014" name="Proc. Natl. Acad. Sci. U.S.A.">
        <title>Trajectory and genomic determinants of fungal-pathogen speciation and host adaptation.</title>
        <authorList>
            <person name="Hu X."/>
            <person name="Xiao G."/>
            <person name="Zheng P."/>
            <person name="Shang Y."/>
            <person name="Su Y."/>
            <person name="Zhang X."/>
            <person name="Liu X."/>
            <person name="Zhan S."/>
            <person name="St Leger R.J."/>
            <person name="Wang C."/>
        </authorList>
    </citation>
    <scope>GENOME REANNOTATION</scope>
    <source>
        <strain>ARSEF 23 / ATCC MYA-3075</strain>
    </source>
</reference>
<reference key="3">
    <citation type="journal article" date="2016" name="J. Antibiot.">
        <title>New natural products isolated from Metarhizium robertsii ARSEF 23 by chemical screening and identification of the gene cluster through engineered biosynthesis in Aspergillus nidulans A1145.</title>
        <authorList>
            <person name="Kato H."/>
            <person name="Tsunematsu Y."/>
            <person name="Yamamoto T."/>
            <person name="Namiki T."/>
            <person name="Kishimoto S."/>
            <person name="Noguchi H."/>
            <person name="Watanabe K."/>
        </authorList>
    </citation>
    <scope>FUNCTION</scope>
    <scope>PATHWAY</scope>
</reference>
<reference key="4">
    <citation type="journal article" date="2022" name="Environ. Microbiol.">
        <title>Mutation of a prenyltransferase results in accumulation of subglutinols and destruxins and enhanced virulence in the insect pathogen, Metarhizium anisopliae.</title>
        <authorList>
            <person name="Li C."/>
            <person name="Huang W."/>
            <person name="Zhou T."/>
            <person name="Zhao Q."/>
            <person name="Huang P."/>
            <person name="Qi P."/>
            <person name="Huang S."/>
            <person name="Huang S."/>
            <person name="Keyhani N.O."/>
            <person name="Huang Z."/>
        </authorList>
    </citation>
    <scope>FUNCTION</scope>
    <scope>INDUCTION</scope>
</reference>
<comment type="function">
    <text evidence="2 6 7">FAD-dependent monooxygenase; part of the gene cluster that mediates the biosynthesis of the immunosuppressants subglutinols, meroterpenoids consisting of an alpha-pyrone (4-hydroxy-5,6-dimethyl-2-pyrone) moiety attached to a decalin core fused to a five-membered cyclic ether carrying a prenylside chain (PubMed:27189118). The first step of the pathway is the synthesis of the alpha-pyrone moiety by the polyketide synthase subA via condensation of one acetyl-CoA starter unit with 3 malonyl-CoA units and 2 methylations (PubMed:27189118). The alpha-pyrone is then combined with geranylgeranyl pyrophosphate (GGPP) formed by the GGPP synthase subD through the action of the prenyltransferase subC to yield a linear alpha-pyrone diterpenoid (PubMed:27189118). Subsequent steps in the subglutinol biosynthetic pathway involve the decalin core formation, which is thought to be initiated by the epoxidation of the C10-C11 olefin by the FAD-dependent oxidoreductase subE (Probable). The following cyclization cascade would be catalyzed by the terpene cyclase subB (Probable). Lastly, the FAD-dependent dehydrogenase subF probably catalyzes the five-membered cyclic ether formation to complete the formation of subglutinol A (Probable). Subsequent redox reactions appear to give rise to subglutinol C and D, however, it remains unclear which enzymes are responsible for these transformations (Probable). SubD may have secondary function in the conversion of the identified subglutinols to subglutinol analog 45, which seems to be the major product of the cluster (PubMed:34863012).</text>
</comment>
<comment type="cofactor">
    <cofactor evidence="5">
        <name>FAD</name>
        <dbReference type="ChEBI" id="CHEBI:57692"/>
    </cofactor>
</comment>
<comment type="pathway">
    <text evidence="2">Secondary metabolite biosynthesis; terpenoid biosynthesis.</text>
</comment>
<comment type="induction">
    <text evidence="3">The subglutinol cluster is highly expressed when mycelia and hyphae are transferred to fresh media for a 3 hour induction period, remaining expressed under conditions of heat shock (PubMed:34863012). The cluster is repressed in cultures reaching stationary phase or in early germinating cultures, as well as under conditions of UV, salt and oxidative stress (PubMed:34863012).</text>
</comment>
<comment type="similarity">
    <text evidence="5">Belongs to the paxM FAD-dependent monooxygenase family.</text>
</comment>
<accession>E9F5F0</accession>
<dbReference type="EC" id="1.-.-.-" evidence="6"/>
<dbReference type="EMBL" id="ADNJ02000014">
    <property type="protein sequence ID" value="EFY96953.2"/>
    <property type="molecule type" value="Genomic_DNA"/>
</dbReference>
<dbReference type="RefSeq" id="XP_007823688.2">
    <property type="nucleotide sequence ID" value="XM_007825497.2"/>
</dbReference>
<dbReference type="SMR" id="E9F5F0"/>
<dbReference type="GeneID" id="19261785"/>
<dbReference type="KEGG" id="maj:MAA_07499"/>
<dbReference type="HOGENOM" id="CLU_009665_12_1_1"/>
<dbReference type="OrthoDB" id="4940251at2759"/>
<dbReference type="UniPathway" id="UPA00213"/>
<dbReference type="Proteomes" id="UP000002498">
    <property type="component" value="Unassembled WGS sequence"/>
</dbReference>
<dbReference type="GO" id="GO:0071949">
    <property type="term" value="F:FAD binding"/>
    <property type="evidence" value="ECO:0007669"/>
    <property type="project" value="InterPro"/>
</dbReference>
<dbReference type="GO" id="GO:0004497">
    <property type="term" value="F:monooxygenase activity"/>
    <property type="evidence" value="ECO:0007669"/>
    <property type="project" value="UniProtKB-KW"/>
</dbReference>
<dbReference type="GO" id="GO:0016114">
    <property type="term" value="P:terpenoid biosynthetic process"/>
    <property type="evidence" value="ECO:0007669"/>
    <property type="project" value="UniProtKB-UniPathway"/>
</dbReference>
<dbReference type="Gene3D" id="3.50.50.60">
    <property type="entry name" value="FAD/NAD(P)-binding domain"/>
    <property type="match status" value="1"/>
</dbReference>
<dbReference type="InterPro" id="IPR002938">
    <property type="entry name" value="FAD-bd"/>
</dbReference>
<dbReference type="InterPro" id="IPR036188">
    <property type="entry name" value="FAD/NAD-bd_sf"/>
</dbReference>
<dbReference type="InterPro" id="IPR050562">
    <property type="entry name" value="FAD_mOase_fung"/>
</dbReference>
<dbReference type="PANTHER" id="PTHR47356:SF2">
    <property type="entry name" value="FAD-BINDING DOMAIN-CONTAINING PROTEIN-RELATED"/>
    <property type="match status" value="1"/>
</dbReference>
<dbReference type="PANTHER" id="PTHR47356">
    <property type="entry name" value="FAD-DEPENDENT MONOOXYGENASE ASQG-RELATED"/>
    <property type="match status" value="1"/>
</dbReference>
<dbReference type="Pfam" id="PF01494">
    <property type="entry name" value="FAD_binding_3"/>
    <property type="match status" value="1"/>
</dbReference>
<dbReference type="PRINTS" id="PR00420">
    <property type="entry name" value="RNGMNOXGNASE"/>
</dbReference>
<dbReference type="SUPFAM" id="SSF51905">
    <property type="entry name" value="FAD/NAD(P)-binding domain"/>
    <property type="match status" value="1"/>
</dbReference>
<feature type="chain" id="PRO_0000451341" description="FAD-dependent monooxygenase subE">
    <location>
        <begin position="1"/>
        <end position="322"/>
    </location>
</feature>
<feature type="binding site" evidence="1">
    <location>
        <position position="35"/>
    </location>
    <ligand>
        <name>FAD</name>
        <dbReference type="ChEBI" id="CHEBI:57692"/>
    </ligand>
</feature>
<feature type="binding site" evidence="1">
    <location>
        <position position="49"/>
    </location>
    <ligand>
        <name>FAD</name>
        <dbReference type="ChEBI" id="CHEBI:57692"/>
    </ligand>
</feature>
<feature type="binding site" evidence="1">
    <location>
        <position position="108"/>
    </location>
    <ligand>
        <name>FAD</name>
        <dbReference type="ChEBI" id="CHEBI:57692"/>
    </ligand>
</feature>
<feature type="binding site" evidence="1">
    <location>
        <position position="313"/>
    </location>
    <ligand>
        <name>FAD</name>
        <dbReference type="ChEBI" id="CHEBI:57692"/>
    </ligand>
</feature>
<proteinExistence type="evidence at transcript level"/>